<organism>
    <name type="scientific">Rotavirus B (isolate RVB/Rat/United States/IDIR/1984/G1P[X])</name>
    <name type="common">RV-B</name>
    <name type="synonym">Rotavirus B (isolate infectious diarrhea of infant rats)</name>
    <dbReference type="NCBI Taxonomy" id="28877"/>
    <lineage>
        <taxon>Viruses</taxon>
        <taxon>Riboviria</taxon>
        <taxon>Orthornavirae</taxon>
        <taxon>Duplornaviricota</taxon>
        <taxon>Resentoviricetes</taxon>
        <taxon>Reovirales</taxon>
        <taxon>Sedoreoviridae</taxon>
        <taxon>Rotavirus</taxon>
        <taxon>Rotavirus B</taxon>
    </lineage>
</organism>
<keyword id="KW-0167">Capsid protein</keyword>
<keyword id="KW-1154">Intermediate capsid protein</keyword>
<keyword id="KW-0946">Virion</keyword>
<proteinExistence type="evidence at transcript level"/>
<name>VP6_ROTGI</name>
<evidence type="ECO:0000255" key="1">
    <source>
        <dbReference type="HAMAP-Rule" id="MF_04126"/>
    </source>
</evidence>
<organismHost>
    <name type="scientific">Homo sapiens</name>
    <name type="common">Human</name>
    <dbReference type="NCBI Taxonomy" id="9606"/>
</organismHost>
<organismHost>
    <name type="scientific">Rattus norvegicus</name>
    <name type="common">Rat</name>
    <dbReference type="NCBI Taxonomy" id="10116"/>
</organismHost>
<dbReference type="EMBL" id="M84456">
    <property type="protein sequence ID" value="AAA47348.1"/>
    <property type="molecule type" value="mRNA"/>
</dbReference>
<dbReference type="PIR" id="A42540">
    <property type="entry name" value="VPXRIB"/>
</dbReference>
<dbReference type="GO" id="GO:0019031">
    <property type="term" value="C:viral envelope"/>
    <property type="evidence" value="ECO:0007669"/>
    <property type="project" value="UniProtKB-UniRule"/>
</dbReference>
<dbReference type="GO" id="GO:0039626">
    <property type="term" value="C:viral intermediate capsid"/>
    <property type="evidence" value="ECO:0007669"/>
    <property type="project" value="UniProtKB-UniRule"/>
</dbReference>
<dbReference type="GO" id="GO:0046789">
    <property type="term" value="F:host cell surface receptor binding"/>
    <property type="evidence" value="ECO:0007669"/>
    <property type="project" value="UniProtKB-UniRule"/>
</dbReference>
<dbReference type="GO" id="GO:0005198">
    <property type="term" value="F:structural molecule activity"/>
    <property type="evidence" value="ECO:0007669"/>
    <property type="project" value="UniProtKB-UniRule"/>
</dbReference>
<dbReference type="GO" id="GO:0019064">
    <property type="term" value="P:fusion of virus membrane with host plasma membrane"/>
    <property type="evidence" value="ECO:0007669"/>
    <property type="project" value="UniProtKB-UniRule"/>
</dbReference>
<dbReference type="HAMAP" id="MF_04126">
    <property type="entry name" value="Rota_VP6"/>
    <property type="match status" value="1"/>
</dbReference>
<dbReference type="InterPro" id="IPR001385">
    <property type="entry name" value="Rotavirus_A/C_VP6"/>
</dbReference>
<feature type="chain" id="PRO_0000149567" description="Intermediate capsid protein VP6">
    <location>
        <begin position="1"/>
        <end position="391"/>
    </location>
</feature>
<sequence length="391" mass="43646">MDLIETVNACVGLQKRVLKLAPNTNLNTAGQSVLNDYNALASRVNGRTYALLDQTAVYTPYTVNAPIISLAVRISTDDYDDMRSGIDSILDILAAAIRTEGSRPTRVIERRVIEPNVKQLVEDLKLKSLTSEISIANMAAVDTALIQPEIIETENPLFADIIEQVIHRPNASMTGGNIRATLGRWSGNKGIVTCMSGMDSEHRFTVDFKTRTCGIINVVYAPTAGVIMIPMPTGRNREGHLIDVSAEMMAENFAIDFMDDDDIIQTETGVGVFSFPMCNRIRFRINPWDMQKHNDNLWTVNLANWPQGTSPRQPAISFLFETRRTFTEGDYQHLSRCAPKVQYMMDTIFPETAFTNRPVVDWNVQSLLTSSSQKTWCQKIAMLIAAYAAKI</sequence>
<comment type="function">
    <text evidence="1">Intermediate capsid protein that self assembles to form an icosahedral capsid with a T=13 symmetry, which consists of 230 trimers of VP6, with channels at each of its five-fold vertices. This capsid constitutes the middle concentric layer of the viral mature particle. The innermost VP2 capsid and the intermediate VP6 capsid remain intact following cell entry to protect the dsRNA from degradation and to prevent unfavorable antiviral responses in the host cell during all the replication cycle of the virus. Nascent transcripts are transcribed within the structural confines of this double-layered particle (DLP) and are extruded through the channels at the five-fold axes. VP6 is required for the transcription activity of the DLP.</text>
</comment>
<comment type="subunit">
    <text evidence="1">Homotrimer. Interacts with the inner capsid protein VP2. Interacts with the outer capsid glycoprotein VP7.</text>
</comment>
<comment type="subcellular location">
    <subcellularLocation>
        <location evidence="1">Virion</location>
    </subcellularLocation>
    <text evidence="1">Component of the intermediate capsid. Also found in spherical cytoplasmic structures, called virus factories, that appear early after infection and are the site of viral replication and packaging.</text>
</comment>
<comment type="similarity">
    <text evidence="1">Belongs to the rotavirus VP6 family.</text>
</comment>
<accession>Q01754</accession>
<protein>
    <recommendedName>
        <fullName evidence="1">Intermediate capsid protein VP6</fullName>
    </recommendedName>
</protein>
<reference key="1">
    <citation type="journal article" date="1992" name="Virology">
        <title>Molecular cloning, sequence analysis, in vitro expression, and immunoprecipitation of the major inner capsid protein of the IDIR strain of group B rotavirus (GBR).</title>
        <authorList>
            <person name="Eiden J.J."/>
            <person name="Nataro J."/>
            <person name="Vonderfecht S."/>
            <person name="Petric M."/>
        </authorList>
    </citation>
    <scope>NUCLEOTIDE SEQUENCE [MRNA]</scope>
</reference>